<feature type="chain" id="PRO_0000239450" description="Beta-catenin-like protein 1">
    <location>
        <begin position="1"/>
        <end position="563"/>
    </location>
</feature>
<feature type="repeat" description="HEAT 1">
    <location>
        <begin position="79"/>
        <end position="129"/>
    </location>
</feature>
<feature type="repeat" description="HEAT 2">
    <location>
        <begin position="134"/>
        <end position="176"/>
    </location>
</feature>
<feature type="repeat" description="ARM 1">
    <location>
        <begin position="178"/>
        <end position="228"/>
    </location>
</feature>
<feature type="repeat" description="ARM 2">
    <location>
        <begin position="229"/>
        <end position="273"/>
    </location>
</feature>
<feature type="repeat" description="ARM 3">
    <location>
        <begin position="274"/>
        <end position="323"/>
    </location>
</feature>
<feature type="repeat" description="ARM 4">
    <location>
        <begin position="325"/>
        <end position="363"/>
    </location>
</feature>
<feature type="repeat" description="ARM 5">
    <location>
        <begin position="364"/>
        <end position="417"/>
    </location>
</feature>
<feature type="region of interest" description="Disordered" evidence="3">
    <location>
        <begin position="1"/>
        <end position="81"/>
    </location>
</feature>
<feature type="coiled-coil region" evidence="1">
    <location>
        <begin position="476"/>
        <end position="540"/>
    </location>
</feature>
<feature type="short sequence motif" description="Nuclear localization signal" evidence="1">
    <location>
        <begin position="16"/>
        <end position="33"/>
    </location>
</feature>
<feature type="short sequence motif" description="Nuclear export signal (NES)" evidence="1">
    <location>
        <begin position="130"/>
        <end position="140"/>
    </location>
</feature>
<feature type="compositionally biased region" description="Basic and acidic residues" evidence="3">
    <location>
        <begin position="34"/>
        <end position="45"/>
    </location>
</feature>
<feature type="compositionally biased region" description="Acidic residues" evidence="3">
    <location>
        <begin position="66"/>
        <end position="78"/>
    </location>
</feature>
<feature type="modified residue" description="N-acetylmethionine" evidence="2">
    <location>
        <position position="1"/>
    </location>
</feature>
<feature type="modified residue" description="N6-acetyllysine" evidence="2">
    <location>
        <position position="91"/>
    </location>
</feature>
<feature type="modified residue" description="Phosphoserine" evidence="2">
    <location>
        <position position="389"/>
    </location>
</feature>
<feature type="modified residue" description="Phosphoserine" evidence="4">
    <location>
        <position position="545"/>
    </location>
</feature>
<proteinExistence type="evidence at protein level"/>
<name>CTBL1_RAT</name>
<protein>
    <recommendedName>
        <fullName>Beta-catenin-like protein 1</fullName>
    </recommendedName>
    <alternativeName>
        <fullName>Nuclear-associated protein</fullName>
        <shortName>NAP</shortName>
    </alternativeName>
</protein>
<evidence type="ECO:0000250" key="1"/>
<evidence type="ECO:0000250" key="2">
    <source>
        <dbReference type="UniProtKB" id="Q8WYA6"/>
    </source>
</evidence>
<evidence type="ECO:0000256" key="3">
    <source>
        <dbReference type="SAM" id="MobiDB-lite"/>
    </source>
</evidence>
<evidence type="ECO:0007744" key="4">
    <source>
    </source>
</evidence>
<organism>
    <name type="scientific">Rattus norvegicus</name>
    <name type="common">Rat</name>
    <dbReference type="NCBI Taxonomy" id="10116"/>
    <lineage>
        <taxon>Eukaryota</taxon>
        <taxon>Metazoa</taxon>
        <taxon>Chordata</taxon>
        <taxon>Craniata</taxon>
        <taxon>Vertebrata</taxon>
        <taxon>Euteleostomi</taxon>
        <taxon>Mammalia</taxon>
        <taxon>Eutheria</taxon>
        <taxon>Euarchontoglires</taxon>
        <taxon>Glires</taxon>
        <taxon>Rodentia</taxon>
        <taxon>Myomorpha</taxon>
        <taxon>Muroidea</taxon>
        <taxon>Muridae</taxon>
        <taxon>Murinae</taxon>
        <taxon>Rattus</taxon>
    </lineage>
</organism>
<dbReference type="EMBL" id="BC097352">
    <property type="protein sequence ID" value="AAH97352.1"/>
    <property type="molecule type" value="mRNA"/>
</dbReference>
<dbReference type="RefSeq" id="NP_001020041.1">
    <property type="nucleotide sequence ID" value="NM_001024870.1"/>
</dbReference>
<dbReference type="SMR" id="Q4V8K2"/>
<dbReference type="FunCoup" id="Q4V8K2">
    <property type="interactions" value="4412"/>
</dbReference>
<dbReference type="STRING" id="10116.ENSRNOP00000060192"/>
<dbReference type="iPTMnet" id="Q4V8K2"/>
<dbReference type="PhosphoSitePlus" id="Q4V8K2"/>
<dbReference type="jPOST" id="Q4V8K2"/>
<dbReference type="PaxDb" id="10116-ENSRNOP00000060192"/>
<dbReference type="GeneID" id="296320"/>
<dbReference type="KEGG" id="rno:296320"/>
<dbReference type="UCSC" id="RGD:1563558">
    <property type="organism name" value="rat"/>
</dbReference>
<dbReference type="AGR" id="RGD:1563558"/>
<dbReference type="CTD" id="56259"/>
<dbReference type="RGD" id="1563558">
    <property type="gene designation" value="Ctnnbl1"/>
</dbReference>
<dbReference type="VEuPathDB" id="HostDB:ENSRNOG00000012021"/>
<dbReference type="eggNOG" id="KOG2734">
    <property type="taxonomic scope" value="Eukaryota"/>
</dbReference>
<dbReference type="HOGENOM" id="CLU_017098_2_1_1"/>
<dbReference type="InParanoid" id="Q4V8K2"/>
<dbReference type="OrthoDB" id="39131at9989"/>
<dbReference type="PhylomeDB" id="Q4V8K2"/>
<dbReference type="Reactome" id="R-RNO-72163">
    <property type="pathway name" value="mRNA Splicing - Major Pathway"/>
</dbReference>
<dbReference type="PRO" id="PR:Q4V8K2"/>
<dbReference type="Proteomes" id="UP000002494">
    <property type="component" value="Chromosome 3"/>
</dbReference>
<dbReference type="Bgee" id="ENSRNOG00000012021">
    <property type="expression patterns" value="Expressed in thymus and 20 other cell types or tissues"/>
</dbReference>
<dbReference type="GO" id="GO:0005634">
    <property type="term" value="C:nucleus"/>
    <property type="evidence" value="ECO:0000250"/>
    <property type="project" value="UniProtKB"/>
</dbReference>
<dbReference type="GO" id="GO:0000974">
    <property type="term" value="C:Prp19 complex"/>
    <property type="evidence" value="ECO:0000250"/>
    <property type="project" value="UniProtKB"/>
</dbReference>
<dbReference type="GO" id="GO:0005681">
    <property type="term" value="C:spliceosomal complex"/>
    <property type="evidence" value="ECO:0000250"/>
    <property type="project" value="UniProtKB"/>
</dbReference>
<dbReference type="GO" id="GO:0019899">
    <property type="term" value="F:enzyme binding"/>
    <property type="evidence" value="ECO:0000266"/>
    <property type="project" value="RGD"/>
</dbReference>
<dbReference type="GO" id="GO:0002250">
    <property type="term" value="P:adaptive immune response"/>
    <property type="evidence" value="ECO:0007669"/>
    <property type="project" value="UniProtKB-KW"/>
</dbReference>
<dbReference type="GO" id="GO:0006397">
    <property type="term" value="P:mRNA processing"/>
    <property type="evidence" value="ECO:0007669"/>
    <property type="project" value="UniProtKB-KW"/>
</dbReference>
<dbReference type="GO" id="GO:0043065">
    <property type="term" value="P:positive regulation of apoptotic process"/>
    <property type="evidence" value="ECO:0000266"/>
    <property type="project" value="RGD"/>
</dbReference>
<dbReference type="GO" id="GO:0008380">
    <property type="term" value="P:RNA splicing"/>
    <property type="evidence" value="ECO:0007669"/>
    <property type="project" value="UniProtKB-KW"/>
</dbReference>
<dbReference type="GO" id="GO:0016445">
    <property type="term" value="P:somatic diversification of immunoglobulins"/>
    <property type="evidence" value="ECO:0000266"/>
    <property type="project" value="RGD"/>
</dbReference>
<dbReference type="FunFam" id="1.25.10.10:FF:001136">
    <property type="entry name" value="Beta-catenin-like protein 1"/>
    <property type="match status" value="1"/>
</dbReference>
<dbReference type="Gene3D" id="1.25.10.10">
    <property type="entry name" value="Leucine-rich Repeat Variant"/>
    <property type="match status" value="1"/>
</dbReference>
<dbReference type="InterPro" id="IPR011989">
    <property type="entry name" value="ARM-like"/>
</dbReference>
<dbReference type="InterPro" id="IPR016024">
    <property type="entry name" value="ARM-type_fold"/>
</dbReference>
<dbReference type="InterPro" id="IPR039678">
    <property type="entry name" value="CTNNBL1"/>
</dbReference>
<dbReference type="InterPro" id="IPR013180">
    <property type="entry name" value="CTNNBL1_N"/>
</dbReference>
<dbReference type="PANTHER" id="PTHR14978:SF0">
    <property type="entry name" value="BETA-CATENIN-LIKE PROTEIN 1"/>
    <property type="match status" value="1"/>
</dbReference>
<dbReference type="PANTHER" id="PTHR14978">
    <property type="entry name" value="BETA-CATENIN-LIKE PROTEIN 1 NUCLEAR ASSOCIATED PROTEIN"/>
    <property type="match status" value="1"/>
</dbReference>
<dbReference type="Pfam" id="PF08216">
    <property type="entry name" value="CTNNBL"/>
    <property type="match status" value="1"/>
</dbReference>
<dbReference type="SMART" id="SM01156">
    <property type="entry name" value="DUF1716"/>
    <property type="match status" value="1"/>
</dbReference>
<dbReference type="SUPFAM" id="SSF48371">
    <property type="entry name" value="ARM repeat"/>
    <property type="match status" value="1"/>
</dbReference>
<comment type="function">
    <text evidence="2">Component of the PRP19-CDC5L complex that forms an integral part of the spliceosome and is required for activating pre-mRNA splicing. Participates in AID/AICDA-mediated somatic hypermutation (SHM) and class-switch recombination (CSR), 2 processes resulting in the production of high-affinity, mutated isotype-switched antibodies.</text>
</comment>
<comment type="subunit">
    <text evidence="1">Component of the PRP19-CDC5L splicing complex composed of a core complex comprising a homotetramer of PRPF19, CDC5L, PLRG1 and BCAS2, and at least three less stably associated proteins CTNNBL1, CWC15 and HSPA8. Interacts directly with CWC15 and CDC5L in the complex. Interacts with AICDA; the interaction is important for the antibody diversification activity of AICDA. Interacts with PRPF31 (via its NLS). Interacts (via its N-terminal NLS) with KPNA1 and KPNA2 (By similarity).</text>
</comment>
<comment type="subcellular location">
    <subcellularLocation>
        <location evidence="1">Nucleus</location>
    </subcellularLocation>
</comment>
<comment type="domain">
    <text evidence="1">The surface residues of the concave side of the superhelical ARM repeat region contribute to, but are not essential for NLS binding.</text>
</comment>
<keyword id="KW-0007">Acetylation</keyword>
<keyword id="KW-1064">Adaptive immunity</keyword>
<keyword id="KW-0175">Coiled coil</keyword>
<keyword id="KW-0391">Immunity</keyword>
<keyword id="KW-0507">mRNA processing</keyword>
<keyword id="KW-0508">mRNA splicing</keyword>
<keyword id="KW-0539">Nucleus</keyword>
<keyword id="KW-0597">Phosphoprotein</keyword>
<keyword id="KW-1185">Reference proteome</keyword>
<keyword id="KW-0677">Repeat</keyword>
<keyword id="KW-0747">Spliceosome</keyword>
<reference key="1">
    <citation type="journal article" date="2004" name="Genome Res.">
        <title>The status, quality, and expansion of the NIH full-length cDNA project: the Mammalian Gene Collection (MGC).</title>
        <authorList>
            <consortium name="The MGC Project Team"/>
        </authorList>
    </citation>
    <scope>NUCLEOTIDE SEQUENCE [LARGE SCALE MRNA]</scope>
    <source>
        <tissue>Thymus</tissue>
    </source>
</reference>
<reference key="2">
    <citation type="journal article" date="2012" name="Nat. Commun.">
        <title>Quantitative maps of protein phosphorylation sites across 14 different rat organs and tissues.</title>
        <authorList>
            <person name="Lundby A."/>
            <person name="Secher A."/>
            <person name="Lage K."/>
            <person name="Nordsborg N.B."/>
            <person name="Dmytriyev A."/>
            <person name="Lundby C."/>
            <person name="Olsen J.V."/>
        </authorList>
    </citation>
    <scope>PHOSPHORYLATION [LARGE SCALE ANALYSIS] AT SER-545</scope>
    <scope>IDENTIFICATION BY MASS SPECTROMETRY [LARGE SCALE ANALYSIS]</scope>
</reference>
<accession>Q4V8K2</accession>
<sequence>MDVGELLSYQPNRGTKRPRDDEEEELKTRRKQTGPRERGRYREDEATAAEDADDDKKRLLQIIDRDGEEEEEEEEPLDESSVKKMILTFEKRSYKNQELRIKFPDNPEKFMESELDLNDIIQEMHVVATMPDLYHLLVELSAVQSLLGLLGHDNTDVSIAVVDLLQELTDIDTLHESEEGAEVLIDALVDGQVVALLVQNLERLDESVREEADGVHNTLAIVENMAEFRPEMCTEAAQQGLLQWLLKRLKAKMPFDANKLYCSEVLAILLQDNDENRELLGELDGIDVLLQQLSVFKRHNPSTAEEQEMMENLFDALCSCLMLSSNRERFLKGEGLQLMNLMLREKKISRSSALKVLDHAMIGPEGADNCHKFVDILGLRTIFPLFMKSPRKIKKVGTTEKEHEEHVCSILASLLRNLRGQQRTRLLNKFTENDSEKVDRLMELHFKYLGAMQVADKKIEGEKHDIVRRGEIIDNDMEDEFYLRRLDAGLFILQHICYIMAEICNANVPQIRQRVHQILNMRGSSIKIVRHIIKEYAENIGDGRSPEFRETEQKRILGLLENF</sequence>
<gene>
    <name type="primary">Ctnnbl1</name>
</gene>